<comment type="function">
    <text evidence="2">Involved in the cleavage of the C1-C2 bond of 3D-(3,5/4)-trihydroxycyclohexane-1,2-dione (THcHDO) to yield 5-deoxy-glucuronate (5DG).</text>
</comment>
<comment type="catalytic activity">
    <reaction evidence="2">
        <text>3D-3,5/4-trihydroxycyclohexane-1,2-dione + H2O = 5-deoxy-D-glucuronate + H(+)</text>
        <dbReference type="Rhea" id="RHEA:25836"/>
        <dbReference type="ChEBI" id="CHEBI:15377"/>
        <dbReference type="ChEBI" id="CHEBI:15378"/>
        <dbReference type="ChEBI" id="CHEBI:28446"/>
        <dbReference type="ChEBI" id="CHEBI:58852"/>
        <dbReference type="EC" id="3.7.1.22"/>
    </reaction>
</comment>
<comment type="cofactor">
    <cofactor evidence="1">
        <name>Mg(2+)</name>
        <dbReference type="ChEBI" id="CHEBI:18420"/>
    </cofactor>
    <text evidence="1">Binds 1 Mg(2+) ion per subunit.</text>
</comment>
<comment type="cofactor">
    <cofactor evidence="1">
        <name>thiamine diphosphate</name>
        <dbReference type="ChEBI" id="CHEBI:58937"/>
    </cofactor>
    <text evidence="1">Binds 1 thiamine pyrophosphate per subunit.</text>
</comment>
<comment type="pathway">
    <text>Polyol metabolism; myo-inositol degradation into acetyl-CoA; acetyl-CoA from myo-inositol: step 3/7.</text>
</comment>
<comment type="similarity">
    <text evidence="3">Belongs to the TPP enzyme family.</text>
</comment>
<comment type="sequence caution" evidence="3">
    <conflict type="erroneous initiation">
        <sequence resource="EMBL-CDS" id="BAA03293"/>
    </conflict>
</comment>
<organism>
    <name type="scientific">Bacillus subtilis (strain 168)</name>
    <dbReference type="NCBI Taxonomy" id="224308"/>
    <lineage>
        <taxon>Bacteria</taxon>
        <taxon>Bacillati</taxon>
        <taxon>Bacillota</taxon>
        <taxon>Bacilli</taxon>
        <taxon>Bacillales</taxon>
        <taxon>Bacillaceae</taxon>
        <taxon>Bacillus</taxon>
    </lineage>
</organism>
<protein>
    <recommendedName>
        <fullName>3D-(3,5/4)-trihydroxycyclohexane-1,2-dione hydrolase</fullName>
        <shortName>THcHDO hydrolase</shortName>
        <ecNumber>3.7.1.22</ecNumber>
    </recommendedName>
</protein>
<feature type="chain" id="PRO_0000090815" description="3D-(3,5/4)-trihydroxycyclohexane-1,2-dione hydrolase">
    <location>
        <begin position="1"/>
        <end position="637"/>
    </location>
</feature>
<feature type="region of interest" description="Thiamine pyrophosphate binding">
    <location>
        <begin position="442"/>
        <end position="522"/>
    </location>
</feature>
<feature type="binding site" evidence="1">
    <location>
        <position position="66"/>
    </location>
    <ligand>
        <name>thiamine diphosphate</name>
        <dbReference type="ChEBI" id="CHEBI:58937"/>
    </ligand>
</feature>
<feature type="binding site" evidence="1">
    <location>
        <position position="493"/>
    </location>
    <ligand>
        <name>Mg(2+)</name>
        <dbReference type="ChEBI" id="CHEBI:18420"/>
    </ligand>
</feature>
<feature type="binding site" evidence="1">
    <location>
        <position position="520"/>
    </location>
    <ligand>
        <name>Mg(2+)</name>
        <dbReference type="ChEBI" id="CHEBI:18420"/>
    </ligand>
</feature>
<dbReference type="EC" id="3.7.1.22"/>
<dbReference type="EMBL" id="D14399">
    <property type="protein sequence ID" value="BAA03293.1"/>
    <property type="status" value="ALT_INIT"/>
    <property type="molecule type" value="Genomic_DNA"/>
</dbReference>
<dbReference type="EMBL" id="AL009126">
    <property type="protein sequence ID" value="CAB16009.2"/>
    <property type="molecule type" value="Genomic_DNA"/>
</dbReference>
<dbReference type="PIR" id="D69645">
    <property type="entry name" value="D69645"/>
</dbReference>
<dbReference type="RefSeq" id="NP_391852.2">
    <property type="nucleotide sequence ID" value="NC_000964.3"/>
</dbReference>
<dbReference type="RefSeq" id="WP_003242642.1">
    <property type="nucleotide sequence ID" value="NZ_OZ025638.1"/>
</dbReference>
<dbReference type="SMR" id="P42415"/>
<dbReference type="FunCoup" id="P42415">
    <property type="interactions" value="47"/>
</dbReference>
<dbReference type="STRING" id="224308.BSU39730"/>
<dbReference type="jPOST" id="P42415"/>
<dbReference type="PaxDb" id="224308-BSU39730"/>
<dbReference type="EnsemblBacteria" id="CAB16009">
    <property type="protein sequence ID" value="CAB16009"/>
    <property type="gene ID" value="BSU_39730"/>
</dbReference>
<dbReference type="GeneID" id="937590"/>
<dbReference type="KEGG" id="bsu:BSU39730"/>
<dbReference type="PATRIC" id="fig|224308.179.peg.4298"/>
<dbReference type="eggNOG" id="COG3962">
    <property type="taxonomic scope" value="Bacteria"/>
</dbReference>
<dbReference type="InParanoid" id="P42415"/>
<dbReference type="OrthoDB" id="4494979at2"/>
<dbReference type="PhylomeDB" id="P42415"/>
<dbReference type="BioCyc" id="BSUB:BSU39730-MONOMER"/>
<dbReference type="BioCyc" id="MetaCyc:BSU39730-MONOMER"/>
<dbReference type="BRENDA" id="3.7.1.22">
    <property type="organism ID" value="658"/>
</dbReference>
<dbReference type="UniPathway" id="UPA00076">
    <property type="reaction ID" value="UER00145"/>
</dbReference>
<dbReference type="Proteomes" id="UP000001570">
    <property type="component" value="Chromosome"/>
</dbReference>
<dbReference type="GO" id="GO:0005948">
    <property type="term" value="C:acetolactate synthase complex"/>
    <property type="evidence" value="ECO:0000318"/>
    <property type="project" value="GO_Central"/>
</dbReference>
<dbReference type="GO" id="GO:0102481">
    <property type="term" value="F:3D-(3,5/4)-trihydroxycyclohexane-1,2-dione hydrolase activity"/>
    <property type="evidence" value="ECO:0007669"/>
    <property type="project" value="UniProtKB-EC"/>
</dbReference>
<dbReference type="GO" id="GO:0003984">
    <property type="term" value="F:acetolactate synthase activity"/>
    <property type="evidence" value="ECO:0000318"/>
    <property type="project" value="GO_Central"/>
</dbReference>
<dbReference type="GO" id="GO:0050660">
    <property type="term" value="F:flavin adenine dinucleotide binding"/>
    <property type="evidence" value="ECO:0000318"/>
    <property type="project" value="GO_Central"/>
</dbReference>
<dbReference type="GO" id="GO:0000287">
    <property type="term" value="F:magnesium ion binding"/>
    <property type="evidence" value="ECO:0007669"/>
    <property type="project" value="UniProtKB-UniRule"/>
</dbReference>
<dbReference type="GO" id="GO:0030976">
    <property type="term" value="F:thiamine pyrophosphate binding"/>
    <property type="evidence" value="ECO:0007669"/>
    <property type="project" value="UniProtKB-UniRule"/>
</dbReference>
<dbReference type="GO" id="GO:0019310">
    <property type="term" value="P:inositol catabolic process"/>
    <property type="evidence" value="ECO:0007669"/>
    <property type="project" value="UniProtKB-UniRule"/>
</dbReference>
<dbReference type="GO" id="GO:0009097">
    <property type="term" value="P:isoleucine biosynthetic process"/>
    <property type="evidence" value="ECO:0000318"/>
    <property type="project" value="GO_Central"/>
</dbReference>
<dbReference type="GO" id="GO:0009099">
    <property type="term" value="P:L-valine biosynthetic process"/>
    <property type="evidence" value="ECO:0000318"/>
    <property type="project" value="GO_Central"/>
</dbReference>
<dbReference type="CDD" id="cd02003">
    <property type="entry name" value="TPP_IolD"/>
    <property type="match status" value="1"/>
</dbReference>
<dbReference type="CDD" id="cd07035">
    <property type="entry name" value="TPP_PYR_POX_like"/>
    <property type="match status" value="1"/>
</dbReference>
<dbReference type="Gene3D" id="3.40.50.970">
    <property type="match status" value="2"/>
</dbReference>
<dbReference type="Gene3D" id="3.40.50.1220">
    <property type="entry name" value="TPP-binding domain"/>
    <property type="match status" value="1"/>
</dbReference>
<dbReference type="HAMAP" id="MF_01669">
    <property type="entry name" value="IolD"/>
    <property type="match status" value="1"/>
</dbReference>
<dbReference type="InterPro" id="IPR029035">
    <property type="entry name" value="DHS-like_NAD/FAD-binding_dom"/>
</dbReference>
<dbReference type="InterPro" id="IPR030817">
    <property type="entry name" value="Myo_inos_IolD"/>
</dbReference>
<dbReference type="InterPro" id="IPR023757">
    <property type="entry name" value="THcHDO_hydrolase_firmi"/>
</dbReference>
<dbReference type="InterPro" id="IPR029061">
    <property type="entry name" value="THDP-binding"/>
</dbReference>
<dbReference type="InterPro" id="IPR012000">
    <property type="entry name" value="Thiamin_PyroP_enz_cen_dom"/>
</dbReference>
<dbReference type="InterPro" id="IPR012001">
    <property type="entry name" value="Thiamin_PyroP_enz_TPP-bd_dom"/>
</dbReference>
<dbReference type="InterPro" id="IPR000399">
    <property type="entry name" value="TPP-bd_CS"/>
</dbReference>
<dbReference type="InterPro" id="IPR045229">
    <property type="entry name" value="TPP_enz"/>
</dbReference>
<dbReference type="InterPro" id="IPR011766">
    <property type="entry name" value="TPP_enzyme_TPP-bd"/>
</dbReference>
<dbReference type="NCBIfam" id="TIGR04377">
    <property type="entry name" value="myo_inos_iolD"/>
    <property type="match status" value="1"/>
</dbReference>
<dbReference type="PANTHER" id="PTHR18968:SF9">
    <property type="entry name" value="3D-(3,5_4)-TRIHYDROXYCYCLOHEXANE-1,2-DIONE HYDROLASE"/>
    <property type="match status" value="1"/>
</dbReference>
<dbReference type="PANTHER" id="PTHR18968">
    <property type="entry name" value="THIAMINE PYROPHOSPHATE ENZYMES"/>
    <property type="match status" value="1"/>
</dbReference>
<dbReference type="Pfam" id="PF02775">
    <property type="entry name" value="TPP_enzyme_C"/>
    <property type="match status" value="1"/>
</dbReference>
<dbReference type="Pfam" id="PF00205">
    <property type="entry name" value="TPP_enzyme_M"/>
    <property type="match status" value="1"/>
</dbReference>
<dbReference type="Pfam" id="PF02776">
    <property type="entry name" value="TPP_enzyme_N"/>
    <property type="match status" value="1"/>
</dbReference>
<dbReference type="SUPFAM" id="SSF52467">
    <property type="entry name" value="DHS-like NAD/FAD-binding domain"/>
    <property type="match status" value="1"/>
</dbReference>
<dbReference type="SUPFAM" id="SSF52518">
    <property type="entry name" value="Thiamin diphosphate-binding fold (THDP-binding)"/>
    <property type="match status" value="2"/>
</dbReference>
<dbReference type="PROSITE" id="PS00187">
    <property type="entry name" value="TPP_ENZYMES"/>
    <property type="match status" value="1"/>
</dbReference>
<name>IOLD_BACSU</name>
<keyword id="KW-0378">Hydrolase</keyword>
<keyword id="KW-0460">Magnesium</keyword>
<keyword id="KW-0479">Metal-binding</keyword>
<keyword id="KW-0520">NAD</keyword>
<keyword id="KW-1185">Reference proteome</keyword>
<keyword id="KW-0786">Thiamine pyrophosphate</keyword>
<sequence>MGKKIRLTTAQALIKFLNQQYIHVDGKEEPFVEGIFTIFGHGNVLGIGQALEQDAGHLKVYQGKNEQGMAHAAMAYSKQMLRRKIYAVSTSVGPGAANLVAAAGTALANNIPVLLIPADTFATRQPDPVLQQMEQEYSAAITTNDALKPVSRYWDRITRPEQLMSSLLRAFEVMTDPAKAGPATICISQDVEGEAYDFDESFFVKRVHYIDRMQPSERELQGAAELIKSSKKPVILVGGGAKYSGARDELVAISEAYNIPLVETQAGKSTVEADFANNLGGMGITGTLAANKAARQADLIIGIGTRYTDFATSSKTAFDFDKAKFLNINVSRMQAYKLDAFQVVADAKVTLGKLHGLLEGYESEFGTTIRELKDEWLAERERLSKVTFKREAFDPEIKNHFSQEVLNEYADALNTELPQTTALLTINETIPEDSVIICSAGSLPGDLQRLWHSNVPNTYHLEYGYSCMGYEVSGTLGLKLAHPDREVYSIVGDGSFLMLHSELITAIQYNKKINVLLFDNSGFGCINNLQMDHGSGSYYCEFRTDDNQILNVDYAKVAEGYGAKTYRANTVEELKAALEDAKKQDVSTLIEMKVLPKTMTDGYDSWWHVGVAEVSEQESVQKAYEAKEKKLESAKQY</sequence>
<gene>
    <name type="primary">iolD</name>
    <name type="synonym">yxdD</name>
    <name type="ordered locus">BSU39730</name>
    <name type="ORF">E83D</name>
</gene>
<evidence type="ECO:0000250" key="1"/>
<evidence type="ECO:0000269" key="2">
    <source>
    </source>
</evidence>
<evidence type="ECO:0000305" key="3"/>
<proteinExistence type="evidence at protein level"/>
<reference key="1">
    <citation type="journal article" date="1994" name="Microbiology">
        <title>Cloning and nucleotide sequencing of a 15 kb region of the Bacillus subtilis genome containing the iol operon.</title>
        <authorList>
            <person name="Yoshida K."/>
            <person name="Sano H."/>
            <person name="Miwa Y."/>
            <person name="Ogasawara N."/>
            <person name="Fujita Y."/>
        </authorList>
    </citation>
    <scope>NUCLEOTIDE SEQUENCE [GENOMIC DNA]</scope>
    <source>
        <strain>168 / BGSC1A1</strain>
    </source>
</reference>
<reference key="2">
    <citation type="journal article" date="1997" name="Nature">
        <title>The complete genome sequence of the Gram-positive bacterium Bacillus subtilis.</title>
        <authorList>
            <person name="Kunst F."/>
            <person name="Ogasawara N."/>
            <person name="Moszer I."/>
            <person name="Albertini A.M."/>
            <person name="Alloni G."/>
            <person name="Azevedo V."/>
            <person name="Bertero M.G."/>
            <person name="Bessieres P."/>
            <person name="Bolotin A."/>
            <person name="Borchert S."/>
            <person name="Borriss R."/>
            <person name="Boursier L."/>
            <person name="Brans A."/>
            <person name="Braun M."/>
            <person name="Brignell S.C."/>
            <person name="Bron S."/>
            <person name="Brouillet S."/>
            <person name="Bruschi C.V."/>
            <person name="Caldwell B."/>
            <person name="Capuano V."/>
            <person name="Carter N.M."/>
            <person name="Choi S.-K."/>
            <person name="Codani J.-J."/>
            <person name="Connerton I.F."/>
            <person name="Cummings N.J."/>
            <person name="Daniel R.A."/>
            <person name="Denizot F."/>
            <person name="Devine K.M."/>
            <person name="Duesterhoeft A."/>
            <person name="Ehrlich S.D."/>
            <person name="Emmerson P.T."/>
            <person name="Entian K.-D."/>
            <person name="Errington J."/>
            <person name="Fabret C."/>
            <person name="Ferrari E."/>
            <person name="Foulger D."/>
            <person name="Fritz C."/>
            <person name="Fujita M."/>
            <person name="Fujita Y."/>
            <person name="Fuma S."/>
            <person name="Galizzi A."/>
            <person name="Galleron N."/>
            <person name="Ghim S.-Y."/>
            <person name="Glaser P."/>
            <person name="Goffeau A."/>
            <person name="Golightly E.J."/>
            <person name="Grandi G."/>
            <person name="Guiseppi G."/>
            <person name="Guy B.J."/>
            <person name="Haga K."/>
            <person name="Haiech J."/>
            <person name="Harwood C.R."/>
            <person name="Henaut A."/>
            <person name="Hilbert H."/>
            <person name="Holsappel S."/>
            <person name="Hosono S."/>
            <person name="Hullo M.-F."/>
            <person name="Itaya M."/>
            <person name="Jones L.-M."/>
            <person name="Joris B."/>
            <person name="Karamata D."/>
            <person name="Kasahara Y."/>
            <person name="Klaerr-Blanchard M."/>
            <person name="Klein C."/>
            <person name="Kobayashi Y."/>
            <person name="Koetter P."/>
            <person name="Koningstein G."/>
            <person name="Krogh S."/>
            <person name="Kumano M."/>
            <person name="Kurita K."/>
            <person name="Lapidus A."/>
            <person name="Lardinois S."/>
            <person name="Lauber J."/>
            <person name="Lazarevic V."/>
            <person name="Lee S.-M."/>
            <person name="Levine A."/>
            <person name="Liu H."/>
            <person name="Masuda S."/>
            <person name="Mauel C."/>
            <person name="Medigue C."/>
            <person name="Medina N."/>
            <person name="Mellado R.P."/>
            <person name="Mizuno M."/>
            <person name="Moestl D."/>
            <person name="Nakai S."/>
            <person name="Noback M."/>
            <person name="Noone D."/>
            <person name="O'Reilly M."/>
            <person name="Ogawa K."/>
            <person name="Ogiwara A."/>
            <person name="Oudega B."/>
            <person name="Park S.-H."/>
            <person name="Parro V."/>
            <person name="Pohl T.M."/>
            <person name="Portetelle D."/>
            <person name="Porwollik S."/>
            <person name="Prescott A.M."/>
            <person name="Presecan E."/>
            <person name="Pujic P."/>
            <person name="Purnelle B."/>
            <person name="Rapoport G."/>
            <person name="Rey M."/>
            <person name="Reynolds S."/>
            <person name="Rieger M."/>
            <person name="Rivolta C."/>
            <person name="Rocha E."/>
            <person name="Roche B."/>
            <person name="Rose M."/>
            <person name="Sadaie Y."/>
            <person name="Sato T."/>
            <person name="Scanlan E."/>
            <person name="Schleich S."/>
            <person name="Schroeter R."/>
            <person name="Scoffone F."/>
            <person name="Sekiguchi J."/>
            <person name="Sekowska A."/>
            <person name="Seror S.J."/>
            <person name="Serror P."/>
            <person name="Shin B.-S."/>
            <person name="Soldo B."/>
            <person name="Sorokin A."/>
            <person name="Tacconi E."/>
            <person name="Takagi T."/>
            <person name="Takahashi H."/>
            <person name="Takemaru K."/>
            <person name="Takeuchi M."/>
            <person name="Tamakoshi A."/>
            <person name="Tanaka T."/>
            <person name="Terpstra P."/>
            <person name="Tognoni A."/>
            <person name="Tosato V."/>
            <person name="Uchiyama S."/>
            <person name="Vandenbol M."/>
            <person name="Vannier F."/>
            <person name="Vassarotti A."/>
            <person name="Viari A."/>
            <person name="Wambutt R."/>
            <person name="Wedler E."/>
            <person name="Wedler H."/>
            <person name="Weitzenegger T."/>
            <person name="Winters P."/>
            <person name="Wipat A."/>
            <person name="Yamamoto H."/>
            <person name="Yamane K."/>
            <person name="Yasumoto K."/>
            <person name="Yata K."/>
            <person name="Yoshida K."/>
            <person name="Yoshikawa H.-F."/>
            <person name="Zumstein E."/>
            <person name="Yoshikawa H."/>
            <person name="Danchin A."/>
        </authorList>
    </citation>
    <scope>NUCLEOTIDE SEQUENCE [LARGE SCALE GENOMIC DNA]</scope>
    <source>
        <strain>168</strain>
    </source>
</reference>
<reference key="3">
    <citation type="journal article" date="2009" name="Microbiology">
        <title>From a consortium sequence to a unified sequence: the Bacillus subtilis 168 reference genome a decade later.</title>
        <authorList>
            <person name="Barbe V."/>
            <person name="Cruveiller S."/>
            <person name="Kunst F."/>
            <person name="Lenoble P."/>
            <person name="Meurice G."/>
            <person name="Sekowska A."/>
            <person name="Vallenet D."/>
            <person name="Wang T."/>
            <person name="Moszer I."/>
            <person name="Medigue C."/>
            <person name="Danchin A."/>
        </authorList>
    </citation>
    <scope>SEQUENCE REVISION TO N-TERMINUS</scope>
</reference>
<reference key="4">
    <citation type="journal article" date="2008" name="J. Biol. Chem.">
        <title>Myo-inositol catabolism in Bacillus subtilis.</title>
        <authorList>
            <person name="Yoshida K."/>
            <person name="Yamaguchi M."/>
            <person name="Morinaga T."/>
            <person name="Kinehara M."/>
            <person name="Ikeuchi M."/>
            <person name="Ashida H."/>
            <person name="Fujita Y."/>
        </authorList>
    </citation>
    <scope>FUNCTION</scope>
    <scope>CATALYTIC ACTIVITY</scope>
    <source>
        <strain>168 / 60015</strain>
    </source>
</reference>
<accession>P42415</accession>